<dbReference type="EC" id="1.14.13.7" evidence="1 3 4 6 7 8 9 10"/>
<dbReference type="EMBL" id="L04488">
    <property type="protein sequence ID" value="AAA34202.1"/>
    <property type="molecule type" value="mRNA"/>
</dbReference>
<dbReference type="PIR" id="S07772">
    <property type="entry name" value="S07772"/>
</dbReference>
<dbReference type="PDB" id="1FOH">
    <property type="method" value="X-ray"/>
    <property type="resolution" value="2.40 A"/>
    <property type="chains" value="A/B/C/D=2-665"/>
</dbReference>
<dbReference type="PDB" id="1PN0">
    <property type="method" value="X-ray"/>
    <property type="resolution" value="1.70 A"/>
    <property type="chains" value="A/B/C/D=1-665"/>
</dbReference>
<dbReference type="PDBsum" id="1FOH"/>
<dbReference type="PDBsum" id="1PN0"/>
<dbReference type="SMR" id="P15245"/>
<dbReference type="KEGG" id="ag:AAA34202"/>
<dbReference type="BioCyc" id="MetaCyc:MONOMER-14669"/>
<dbReference type="UniPathway" id="UPA00728"/>
<dbReference type="EvolutionaryTrace" id="P15245"/>
<dbReference type="GO" id="GO:0071949">
    <property type="term" value="F:FAD binding"/>
    <property type="evidence" value="ECO:0007669"/>
    <property type="project" value="InterPro"/>
</dbReference>
<dbReference type="GO" id="GO:0018662">
    <property type="term" value="F:phenol 2-monooxygenase activity"/>
    <property type="evidence" value="ECO:0007669"/>
    <property type="project" value="UniProtKB-EC"/>
</dbReference>
<dbReference type="GO" id="GO:0019336">
    <property type="term" value="P:phenol-containing compound catabolic process"/>
    <property type="evidence" value="ECO:0007669"/>
    <property type="project" value="UniProtKB-UniPathway"/>
</dbReference>
<dbReference type="CDD" id="cd02979">
    <property type="entry name" value="PHOX_C"/>
    <property type="match status" value="1"/>
</dbReference>
<dbReference type="Gene3D" id="3.40.30.20">
    <property type="match status" value="1"/>
</dbReference>
<dbReference type="Gene3D" id="3.30.9.10">
    <property type="entry name" value="D-Amino Acid Oxidase, subunit A, domain 2"/>
    <property type="match status" value="1"/>
</dbReference>
<dbReference type="Gene3D" id="3.50.50.60">
    <property type="entry name" value="FAD/NAD(P)-binding domain"/>
    <property type="match status" value="1"/>
</dbReference>
<dbReference type="InterPro" id="IPR002938">
    <property type="entry name" value="FAD-bd"/>
</dbReference>
<dbReference type="InterPro" id="IPR036188">
    <property type="entry name" value="FAD/NAD-bd_sf"/>
</dbReference>
<dbReference type="InterPro" id="IPR012941">
    <property type="entry name" value="Phe_hydrox_C_dim_dom"/>
</dbReference>
<dbReference type="InterPro" id="IPR038220">
    <property type="entry name" value="PHOX_C_sf"/>
</dbReference>
<dbReference type="InterPro" id="IPR050641">
    <property type="entry name" value="RIFMO-like"/>
</dbReference>
<dbReference type="InterPro" id="IPR036249">
    <property type="entry name" value="Thioredoxin-like_sf"/>
</dbReference>
<dbReference type="PANTHER" id="PTHR43004:SF20">
    <property type="entry name" value="2-MONOOXYGENASE, PUTATIVE (AFU_ORTHOLOGUE AFUA_1G13660)-RELATED"/>
    <property type="match status" value="1"/>
</dbReference>
<dbReference type="PANTHER" id="PTHR43004">
    <property type="entry name" value="TRK SYSTEM POTASSIUM UPTAKE PROTEIN"/>
    <property type="match status" value="1"/>
</dbReference>
<dbReference type="Pfam" id="PF01494">
    <property type="entry name" value="FAD_binding_3"/>
    <property type="match status" value="1"/>
</dbReference>
<dbReference type="Pfam" id="PF07976">
    <property type="entry name" value="Phe_hydrox_dim"/>
    <property type="match status" value="1"/>
</dbReference>
<dbReference type="PRINTS" id="PR00420">
    <property type="entry name" value="RNGMNOXGNASE"/>
</dbReference>
<dbReference type="SUPFAM" id="SSF54373">
    <property type="entry name" value="FAD-linked reductases, C-terminal domain"/>
    <property type="match status" value="1"/>
</dbReference>
<dbReference type="SUPFAM" id="SSF51905">
    <property type="entry name" value="FAD/NAD(P)-binding domain"/>
    <property type="match status" value="1"/>
</dbReference>
<dbReference type="SUPFAM" id="SSF52833">
    <property type="entry name" value="Thioredoxin-like"/>
    <property type="match status" value="1"/>
</dbReference>
<proteinExistence type="evidence at protein level"/>
<organism>
    <name type="scientific">Cutaneotrichosporon cutaneum</name>
    <name type="common">Yeast</name>
    <name type="synonym">Trichosporon cutaneum</name>
    <dbReference type="NCBI Taxonomy" id="5554"/>
    <lineage>
        <taxon>Eukaryota</taxon>
        <taxon>Fungi</taxon>
        <taxon>Dikarya</taxon>
        <taxon>Basidiomycota</taxon>
        <taxon>Agaricomycotina</taxon>
        <taxon>Tremellomycetes</taxon>
        <taxon>Trichosporonales</taxon>
        <taxon>Trichosporonaceae</taxon>
        <taxon>Cutaneotrichosporon</taxon>
    </lineage>
</organism>
<feature type="initiator methionine" description="Removed" evidence="5">
    <location>
        <position position="1"/>
    </location>
</feature>
<feature type="chain" id="PRO_0000214045" description="Phenol hydroxylase">
    <location>
        <begin position="2"/>
        <end position="665"/>
    </location>
</feature>
<feature type="binding site" evidence="2 11 15 16">
    <location>
        <begin position="18"/>
        <end position="19"/>
    </location>
    <ligand>
        <name>FAD</name>
        <dbReference type="ChEBI" id="CHEBI:57692"/>
    </ligand>
</feature>
<feature type="binding site" evidence="2 11 15 16">
    <location>
        <begin position="43"/>
        <end position="45"/>
    </location>
    <ligand>
        <name>FAD</name>
        <dbReference type="ChEBI" id="CHEBI:57692"/>
    </ligand>
</feature>
<feature type="binding site" evidence="2 11 15 16">
    <location>
        <begin position="51"/>
        <end position="56"/>
    </location>
    <ligand>
        <name>FAD</name>
        <dbReference type="ChEBI" id="CHEBI:57692"/>
    </ligand>
</feature>
<feature type="binding site" evidence="2 11 15 16">
    <location>
        <position position="55"/>
    </location>
    <ligand>
        <name>substrate</name>
    </ligand>
</feature>
<feature type="binding site" evidence="2 11 15 16">
    <location>
        <position position="118"/>
    </location>
    <ligand>
        <name>FAD</name>
        <dbReference type="ChEBI" id="CHEBI:57692"/>
    </ligand>
</feature>
<feature type="binding site" evidence="2 11 15 16">
    <location>
        <position position="290"/>
    </location>
    <ligand>
        <name>FAD</name>
        <dbReference type="ChEBI" id="CHEBI:57692"/>
    </ligand>
</feature>
<feature type="binding site" evidence="2 11 15 16">
    <location>
        <position position="290"/>
    </location>
    <ligand>
        <name>substrate</name>
    </ligand>
</feature>
<feature type="binding site" evidence="15 16">
    <location>
        <position position="358"/>
    </location>
    <ligand>
        <name>FAD</name>
        <dbReference type="ChEBI" id="CHEBI:57692"/>
    </ligand>
</feature>
<feature type="binding site" evidence="2 11 15 16">
    <location>
        <begin position="368"/>
        <end position="372"/>
    </location>
    <ligand>
        <name>FAD</name>
        <dbReference type="ChEBI" id="CHEBI:57692"/>
    </ligand>
</feature>
<feature type="mutagenesis site" description="Leads to a significant slower initial step of the oxidative half-reaction." evidence="1">
    <original>D</original>
    <variation>N</variation>
    <location>
        <position position="55"/>
    </location>
</feature>
<feature type="mutagenesis site" description="Leads to a significant slower initial step of the oxidative half-reaction." evidence="1">
    <original>R</original>
    <variation>M</variation>
    <location>
        <position position="282"/>
    </location>
</feature>
<feature type="mutagenesis site" description="Leads to a slightly higher redox potential but is reduced by NADPH much slower." evidence="1">
    <original>Y</original>
    <variation>F</variation>
    <location>
        <position position="290"/>
    </location>
</feature>
<feature type="strand" evidence="18">
    <location>
        <begin position="4"/>
        <end position="14"/>
    </location>
</feature>
<feature type="helix" evidence="18">
    <location>
        <begin position="18"/>
        <end position="33"/>
    </location>
</feature>
<feature type="strand" evidence="18">
    <location>
        <begin position="39"/>
        <end position="42"/>
    </location>
</feature>
<feature type="strand" evidence="18">
    <location>
        <begin position="44"/>
        <end position="47"/>
    </location>
</feature>
<feature type="helix" evidence="18">
    <location>
        <begin position="59"/>
        <end position="66"/>
    </location>
</feature>
<feature type="turn" evidence="18">
    <location>
        <begin position="67"/>
        <end position="69"/>
    </location>
</feature>
<feature type="helix" evidence="18">
    <location>
        <begin position="71"/>
        <end position="75"/>
    </location>
</feature>
<feature type="strand" evidence="18">
    <location>
        <begin position="83"/>
        <end position="89"/>
    </location>
</feature>
<feature type="strand" evidence="18">
    <location>
        <begin position="95"/>
        <end position="104"/>
    </location>
</feature>
<feature type="helix" evidence="18">
    <location>
        <begin position="118"/>
        <end position="133"/>
    </location>
</feature>
<feature type="strand" evidence="18">
    <location>
        <begin position="142"/>
        <end position="150"/>
    </location>
</feature>
<feature type="helix" evidence="18">
    <location>
        <begin position="152"/>
        <end position="154"/>
    </location>
</feature>
<feature type="strand" evidence="18">
    <location>
        <begin position="163"/>
        <end position="169"/>
    </location>
</feature>
<feature type="helix" evidence="18">
    <location>
        <begin position="172"/>
        <end position="174"/>
    </location>
</feature>
<feature type="strand" evidence="18">
    <location>
        <begin position="186"/>
        <end position="188"/>
    </location>
</feature>
<feature type="helix" evidence="18">
    <location>
        <begin position="192"/>
        <end position="200"/>
    </location>
</feature>
<feature type="strand" evidence="18">
    <location>
        <begin position="214"/>
        <end position="224"/>
    </location>
</feature>
<feature type="helix" evidence="18">
    <location>
        <begin position="231"/>
        <end position="236"/>
    </location>
</feature>
<feature type="strand" evidence="18">
    <location>
        <begin position="241"/>
        <end position="257"/>
    </location>
</feature>
<feature type="turn" evidence="18">
    <location>
        <begin position="261"/>
        <end position="264"/>
    </location>
</feature>
<feature type="strand" evidence="18">
    <location>
        <begin position="265"/>
        <end position="270"/>
    </location>
</feature>
<feature type="strand" evidence="18">
    <location>
        <begin position="272"/>
        <end position="274"/>
    </location>
</feature>
<feature type="strand" evidence="18">
    <location>
        <begin position="276"/>
        <end position="281"/>
    </location>
</feature>
<feature type="strand" evidence="18">
    <location>
        <begin position="287"/>
        <end position="293"/>
    </location>
</feature>
<feature type="turn" evidence="17">
    <location>
        <begin position="305"/>
        <end position="307"/>
    </location>
</feature>
<feature type="helix" evidence="18">
    <location>
        <begin position="310"/>
        <end position="321"/>
    </location>
</feature>
<feature type="strand" evidence="18">
    <location>
        <begin position="327"/>
        <end position="343"/>
    </location>
</feature>
<feature type="strand" evidence="18">
    <location>
        <begin position="347"/>
        <end position="349"/>
    </location>
</feature>
<feature type="turn" evidence="18">
    <location>
        <begin position="350"/>
        <end position="352"/>
    </location>
</feature>
<feature type="strand" evidence="18">
    <location>
        <begin position="353"/>
        <end position="355"/>
    </location>
</feature>
<feature type="helix" evidence="18">
    <location>
        <begin position="357"/>
        <end position="359"/>
    </location>
</feature>
<feature type="helix" evidence="18">
    <location>
        <begin position="370"/>
        <end position="389"/>
    </location>
</feature>
<feature type="helix" evidence="18">
    <location>
        <begin position="395"/>
        <end position="399"/>
    </location>
</feature>
<feature type="helix" evidence="18">
    <location>
        <begin position="400"/>
        <end position="424"/>
    </location>
</feature>
<feature type="strand" evidence="17">
    <location>
        <begin position="429"/>
        <end position="432"/>
    </location>
</feature>
<feature type="strand" evidence="17">
    <location>
        <begin position="435"/>
        <end position="437"/>
    </location>
</feature>
<feature type="helix" evidence="18">
    <location>
        <begin position="439"/>
        <end position="453"/>
    </location>
</feature>
<feature type="helix" evidence="18">
    <location>
        <begin position="473"/>
        <end position="475"/>
    </location>
</feature>
<feature type="strand" evidence="18">
    <location>
        <begin position="489"/>
        <end position="492"/>
    </location>
</feature>
<feature type="turn" evidence="18">
    <location>
        <begin position="493"/>
        <end position="496"/>
    </location>
</feature>
<feature type="strand" evidence="18">
    <location>
        <begin position="497"/>
        <end position="500"/>
    </location>
</feature>
<feature type="helix" evidence="18">
    <location>
        <begin position="501"/>
        <end position="504"/>
    </location>
</feature>
<feature type="strand" evidence="18">
    <location>
        <begin position="511"/>
        <end position="518"/>
    </location>
</feature>
<feature type="helix" evidence="18">
    <location>
        <begin position="523"/>
        <end position="537"/>
    </location>
</feature>
<feature type="helix" evidence="18">
    <location>
        <begin position="542"/>
        <end position="546"/>
    </location>
</feature>
<feature type="strand" evidence="18">
    <location>
        <begin position="555"/>
        <end position="565"/>
    </location>
</feature>
<feature type="helix" evidence="18">
    <location>
        <begin position="572"/>
        <end position="574"/>
    </location>
</feature>
<feature type="turn" evidence="18">
    <location>
        <begin position="577"/>
        <end position="580"/>
    </location>
</feature>
<feature type="strand" evidence="18">
    <location>
        <begin position="587"/>
        <end position="591"/>
    </location>
</feature>
<feature type="strand" evidence="18">
    <location>
        <begin position="596"/>
        <end position="598"/>
    </location>
</feature>
<feature type="helix" evidence="18">
    <location>
        <begin position="603"/>
        <end position="607"/>
    </location>
</feature>
<feature type="turn" evidence="18">
    <location>
        <begin position="611"/>
        <end position="613"/>
    </location>
</feature>
<feature type="strand" evidence="18">
    <location>
        <begin position="615"/>
        <end position="619"/>
    </location>
</feature>
<feature type="strand" evidence="18">
    <location>
        <begin position="623"/>
        <end position="629"/>
    </location>
</feature>
<feature type="helix" evidence="18">
    <location>
        <begin position="634"/>
        <end position="642"/>
    </location>
</feature>
<feature type="strand" evidence="18">
    <location>
        <begin position="649"/>
        <end position="651"/>
    </location>
</feature>
<comment type="function">
    <text evidence="1 3 4 6 7 8 9 10">Hydroxylates phenol to catechol (PubMed:11591156, PubMed:1429434, PubMed:2022646, PubMed:3203745, PubMed:4146224, PubMed:7851397, PubMed:7858421). Phenol is the best substrate, but the enzyme also accepts isomeric diphenols, hydroxyl-, amino-, halogen- or methyl-substituted phenols and, to a lesser degree, cresols (PubMed:17425111, PubMed:4146224, PubMed:7851397).</text>
</comment>
<comment type="catalytic activity">
    <reaction evidence="1 3 4 6 7 8 9 10">
        <text>phenol + NADPH + O2 + H(+) = catechol + NADP(+) + H2O</text>
        <dbReference type="Rhea" id="RHEA:17061"/>
        <dbReference type="ChEBI" id="CHEBI:15377"/>
        <dbReference type="ChEBI" id="CHEBI:15378"/>
        <dbReference type="ChEBI" id="CHEBI:15379"/>
        <dbReference type="ChEBI" id="CHEBI:15882"/>
        <dbReference type="ChEBI" id="CHEBI:18135"/>
        <dbReference type="ChEBI" id="CHEBI:57783"/>
        <dbReference type="ChEBI" id="CHEBI:58349"/>
        <dbReference type="EC" id="1.14.13.7"/>
    </reaction>
</comment>
<comment type="cofactor">
    <cofactor evidence="2 8 11">
        <name>FAD</name>
        <dbReference type="ChEBI" id="CHEBI:57692"/>
    </cofactor>
</comment>
<comment type="activity regulation">
    <text evidence="8">Inhibited by excess phenol (PubMed:4146224). Heavy metals such AsCuSO(4), AgNO(3), or HgCl(2) severely inhibit activity (PubMed:4146224).</text>
</comment>
<comment type="biophysicochemical properties">
    <kinetics>
        <KM evidence="8">18 uM for phenol</KM>
        <KM evidence="8">71 uM for NADPH</KM>
        <KM evidence="8">53 uM for O(2)</KM>
    </kinetics>
    <phDependence>
        <text evidence="7 8">Optimum pH is 7.2-7.6.</text>
    </phDependence>
    <temperatureDependence>
        <text evidence="7">Optimum temperature is 30 degrees Celsius.</text>
    </temperatureDependence>
</comment>
<comment type="pathway">
    <text evidence="3">Aromatic compound metabolism; phenol degradation.</text>
</comment>
<comment type="subunit">
    <text evidence="11">Homodimer.</text>
</comment>
<comment type="similarity">
    <text evidence="14">Belongs to the PheA/TfdB FAD monooxygenase family.</text>
</comment>
<sequence>MTKYSESYCDVLIVGAGPAGLMAARVLSEYVRQKPDLKVRIIDKRSTKVYNGQADGLQCRTLESLKNLGLADKILSEANDMSTIALYNPDENGHIRRTDRIPDTLPGISRYHQVVLHQGRIERHILDSIAEISDTRIKVERPLIPEKMEIDSSKAEDPEAYPVTMTLRYMSDHESTPLQFGHKTENSLFHSNLQTQEEEDANYRLPEGKEAGEIETVHCKYVIGCDGGHSWVRRTLGFEMIGEQTDYIWGVLDAVPASNFPDIRSPCAIHSAESGSIMIIPRENNLVRFYVQLQARAEKGGRVDRTKFTPEVVIANAKKIFHPYTFDVQQLDWFTAYHIGQRVTEKFSKDERVFIAGDACHTHSPKAGQGMNTSMMDTYNLGWKLGLVLTGRAKRDILKTYEEERHAFAQALIDFDHQFSRLFSGRPAKDVADEMGVSMDVFKEAFVKGNEFASGTAINYDENLVTDKKSSKQELAKNCVVGTRFKSQPVVRHSEGLWMHFGDRLVTDGRFRIIVFAGKATDATQMSRIKKFSAYLDSENSVISLYTPKVSDRNSRIDVITIHSCHRDDIEMHDFPAPALHPKWQYDFIYADCDSWHHPHPKSYQAWGVDETKGAVVVVRPDGYTSLVTDLEGTAEIDRYFSGILVEPKEKSGAQTEADWTKSTA</sequence>
<protein>
    <recommendedName>
        <fullName evidence="12">Phenol hydroxylase</fullName>
        <shortName evidence="13">PHHY</shortName>
        <ecNumber evidence="1 3 4 6 7 8 9 10">1.14.13.7</ecNumber>
    </recommendedName>
</protein>
<keyword id="KW-0002">3D-structure</keyword>
<keyword id="KW-0058">Aromatic hydrocarbons catabolism</keyword>
<keyword id="KW-0903">Direct protein sequencing</keyword>
<keyword id="KW-0274">FAD</keyword>
<keyword id="KW-0285">Flavoprotein</keyword>
<keyword id="KW-0503">Monooxygenase</keyword>
<keyword id="KW-0521">NADP</keyword>
<keyword id="KW-0560">Oxidoreductase</keyword>
<evidence type="ECO:0000269" key="1">
    <source>
    </source>
</evidence>
<evidence type="ECO:0000269" key="2">
    <source>
    </source>
</evidence>
<evidence type="ECO:0000269" key="3">
    <source>
    </source>
</evidence>
<evidence type="ECO:0000269" key="4">
    <source>
    </source>
</evidence>
<evidence type="ECO:0000269" key="5">
    <source>
    </source>
</evidence>
<evidence type="ECO:0000269" key="6">
    <source>
    </source>
</evidence>
<evidence type="ECO:0000269" key="7">
    <source>
    </source>
</evidence>
<evidence type="ECO:0000269" key="8">
    <source>
    </source>
</evidence>
<evidence type="ECO:0000269" key="9">
    <source>
    </source>
</evidence>
<evidence type="ECO:0000269" key="10">
    <source>
    </source>
</evidence>
<evidence type="ECO:0000269" key="11">
    <source>
    </source>
</evidence>
<evidence type="ECO:0000303" key="12">
    <source>
    </source>
</evidence>
<evidence type="ECO:0000303" key="13">
    <source>
    </source>
</evidence>
<evidence type="ECO:0000305" key="14"/>
<evidence type="ECO:0007744" key="15">
    <source>
        <dbReference type="PDB" id="1FOH"/>
    </source>
</evidence>
<evidence type="ECO:0007744" key="16">
    <source>
        <dbReference type="PDB" id="1PN0"/>
    </source>
</evidence>
<evidence type="ECO:0007829" key="17">
    <source>
        <dbReference type="PDB" id="1FOH"/>
    </source>
</evidence>
<evidence type="ECO:0007829" key="18">
    <source>
        <dbReference type="PDB" id="1PN0"/>
    </source>
</evidence>
<accession>P15245</accession>
<reference key="1">
    <citation type="journal article" date="1992" name="J. Bacteriol.">
        <title>Phenol hydroxylase from Trichosporon cutaneum: gene cloning, sequence analysis, and functional expression in Escherichia coli.</title>
        <authorList>
            <person name="Kalin M."/>
            <person name="Neujahr H.Y."/>
            <person name="Weissmahr R.N."/>
            <person name="Sejlitz T."/>
            <person name="Johl R."/>
            <person name="Fiechter A."/>
            <person name="Reiser J."/>
        </authorList>
    </citation>
    <scope>NUCLEOTIDE SEQUENCE [MRNA]</scope>
    <scope>PARTIAL PROTEIN SEQUENCE</scope>
    <scope>FUNCTION</scope>
    <scope>CATALYTIC ACTIVITY</scope>
    <source>
        <strain>ATCC 46490</strain>
    </source>
</reference>
<reference key="2">
    <citation type="journal article" date="1990" name="Eur. J. Biochem.">
        <title>Amino acid sequences around the pyridoxal-5'-phosphate-binding sites of phenol hydroxylase.</title>
        <authorList>
            <person name="Sejlitz T."/>
            <person name="Wernstedt C."/>
            <person name="Engstroem A."/>
            <person name="Neujahr H.N."/>
        </authorList>
    </citation>
    <scope>PROTEIN SEQUENCE OF 30-64; 299-311 AND 352-377</scope>
    <source>
        <strain>ATCC 46490</strain>
    </source>
</reference>
<reference key="3">
    <citation type="journal article" date="1991" name="Protein Seq. Data Anal.">
        <title>The N-terminal amino acid sequence of phenol hydroxylase contains a dinucleotide-binding sequence motif.</title>
        <authorList>
            <person name="Sejlitz T."/>
            <person name="Wernstedt C."/>
            <person name="Hellman U."/>
            <person name="Neujahr H.Y."/>
        </authorList>
    </citation>
    <scope>PROTEIN SEQUENCE OF 2-80 AND 662-665</scope>
</reference>
<reference key="4">
    <citation type="journal article" date="1973" name="Eur. J. Biochem.">
        <title>Phenol hydroxylase from yeast. Purification and properties of the enzyme from Trichosporon cutaneum.</title>
        <authorList>
            <person name="Neujahr H.Y."/>
            <person name="Gaal A."/>
        </authorList>
    </citation>
    <scope>FUNCTION</scope>
    <scope>CATALYTIC ACTIVITY</scope>
    <scope>BIOPHYSICOCHEMICAL PROPERTIES</scope>
    <scope>COFACTOR</scope>
    <scope>ACTIVITY REGULATION</scope>
</reference>
<reference key="5">
    <citation type="journal article" date="1988" name="FEBS Lett.">
        <title>Activation enthalpies and pH dependence of phenol hydroxylase from Trichosporon cutaneum, in vitro and in situ.</title>
        <authorList>
            <person name="Moertberg M."/>
            <person name="Neujahr H.Y."/>
        </authorList>
    </citation>
    <scope>FUNCTION</scope>
    <scope>CATALYTIC ACTIVITY</scope>
    <scope>BIOPHYSICOCHEMICAL PROPERTIES</scope>
</reference>
<reference key="6">
    <citation type="journal article" date="1991" name="J. Biol. Chem.">
        <title>Kinetic and isotopic studies of the oxidative half-reaction of phenol hydroxylase.</title>
        <authorList>
            <person name="Taylor M.G."/>
            <person name="Massey V."/>
        </authorList>
    </citation>
    <scope>FUNCTION</scope>
    <scope>CATALYTIC ACTIVITY</scope>
</reference>
<reference key="7">
    <citation type="journal article" date="1994" name="Protein Expr. Purif.">
        <title>A fermentor culture for production of recombinant phenol hydroxylase.</title>
        <authorList>
            <person name="Waters S."/>
            <person name="Neujahr H.Y."/>
        </authorList>
    </citation>
    <scope>FUNCTION</scope>
    <scope>CATALYTIC ACTIVITY</scope>
    <scope>BIOPHYSICOCHEMICAL PROPERTIES</scope>
</reference>
<reference key="8">
    <citation type="journal article" date="1995" name="Eur. J. Biochem.">
        <title>Conversion of phenol derivatives to hydroxylated products by phenol hydroxylase from Trichosporon cutaneum. A comparison of regioselectivity and rate of conversion with calculated molecular orbital substrate characteristics.</title>
        <authorList>
            <person name="Peelen S."/>
            <person name="Rietjens I.M."/>
            <person name="Boersma M.G."/>
            <person name="Vervoort J."/>
        </authorList>
    </citation>
    <scope>FUNCTION</scope>
    <scope>CATALYTIC ACTIVITY</scope>
</reference>
<reference key="9">
    <citation type="journal article" date="2001" name="Biochemistry">
        <title>Studies of the mechanism of phenol hydroxylase: mutants Tyr289Phe, Asp54Asn, and Arg281Met.</title>
        <authorList>
            <person name="Xu D."/>
            <person name="Ballou D.P."/>
            <person name="Massey V."/>
        </authorList>
    </citation>
    <scope>FUNCTION</scope>
    <scope>CATALYTIC ACTIVITY</scope>
    <scope>MUTAGENESIS OF ASP-55; ARG-282 AND TYR-290</scope>
</reference>
<reference key="10">
    <citation type="journal article" date="2007" name="Z. Naturforsch. C">
        <title>Influence of various phenolic compounds on phenol hydroxylase activity of a Trichosporon cutaneum strain.</title>
        <authorList>
            <person name="Gerginova M."/>
            <person name="Manasiev J."/>
            <person name="Shivarova N."/>
            <person name="Alexieva Z."/>
        </authorList>
    </citation>
    <scope>FUNCTION</scope>
    <scope>CATALYTIC ACTIVITY</scope>
    <source>
        <strain>R57</strain>
    </source>
</reference>
<reference key="11">
    <citation type="journal article" date="1998" name="Structure">
        <title>The crystal structure of phenol hydroxylase in complex with FAD and phenol provides evidence for a concerted conformational change in the enzyme and its cofactor during catalysis.</title>
        <authorList>
            <person name="Enroth C."/>
            <person name="Neujahr H.Y."/>
            <person name="Schneider G."/>
            <person name="Lindqvist Y."/>
        </authorList>
    </citation>
    <scope>X-RAY CRYSTALLOGRAPHY (2.40 ANGSTROMS) OF 2-665 IN COMPLEX WITH FAD AND PHENOL</scope>
    <scope>SUBUNIT</scope>
    <scope>COFACTOR</scope>
    <source>
        <strain>ATCC 46490</strain>
    </source>
</reference>
<reference key="12">
    <citation type="journal article" date="2003" name="Acta Crystallogr. D">
        <title>High-resolution structure of phenol hydroxylase and correction of sequence errors.</title>
        <authorList>
            <person name="Enroth C."/>
        </authorList>
    </citation>
    <scope>X-RAY CRYSTALLOGRAPHY (1.70 ANGSTROMS) IN COMPLEX WITH FAD AND PHENOL</scope>
    <scope>COFACTOR</scope>
</reference>
<name>PHHY_CUTCT</name>